<comment type="catalytic activity">
    <reaction>
        <text>[protein]-peptidylproline (omega=180) = [protein]-peptidylproline (omega=0)</text>
        <dbReference type="Rhea" id="RHEA:16237"/>
        <dbReference type="Rhea" id="RHEA-COMP:10747"/>
        <dbReference type="Rhea" id="RHEA-COMP:10748"/>
        <dbReference type="ChEBI" id="CHEBI:83833"/>
        <dbReference type="ChEBI" id="CHEBI:83834"/>
        <dbReference type="EC" id="5.2.1.8"/>
    </reaction>
</comment>
<name>Y542_RICCN</name>
<gene>
    <name type="ordered locus">RC0542</name>
</gene>
<feature type="chain" id="PRO_0000075379" description="Putative peptidyl-prolyl cis-trans isomerase RC0542">
    <location>
        <begin position="1"/>
        <end position="331"/>
    </location>
</feature>
<feature type="domain" description="PPIase FKBP-type" evidence="1">
    <location>
        <begin position="128"/>
        <end position="226"/>
    </location>
</feature>
<feature type="region of interest" description="Disordered" evidence="2">
    <location>
        <begin position="33"/>
        <end position="54"/>
    </location>
</feature>
<accession>Q92I78</accession>
<keyword id="KW-0413">Isomerase</keyword>
<keyword id="KW-0697">Rotamase</keyword>
<protein>
    <recommendedName>
        <fullName>Putative peptidyl-prolyl cis-trans isomerase RC0542</fullName>
        <shortName>PPIase RC0542</shortName>
        <ecNumber>5.2.1.8</ecNumber>
    </recommendedName>
    <alternativeName>
        <fullName>Rotamase RC0542</fullName>
    </alternativeName>
</protein>
<proteinExistence type="predicted"/>
<reference key="1">
    <citation type="journal article" date="2001" name="Science">
        <title>Mechanisms of evolution in Rickettsia conorii and R. prowazekii.</title>
        <authorList>
            <person name="Ogata H."/>
            <person name="Audic S."/>
            <person name="Renesto-Audiffren P."/>
            <person name="Fournier P.-E."/>
            <person name="Barbe V."/>
            <person name="Samson D."/>
            <person name="Roux V."/>
            <person name="Cossart P."/>
            <person name="Weissenbach J."/>
            <person name="Claverie J.-M."/>
            <person name="Raoult D."/>
        </authorList>
    </citation>
    <scope>NUCLEOTIDE SEQUENCE [LARGE SCALE GENOMIC DNA]</scope>
    <source>
        <strain>ATCC VR-613 / Malish 7</strain>
    </source>
</reference>
<sequence>MQKFLSLIIVILILYNIVKLKISPDNNNLTTVEQTASNNSSTDENQTSINNEPPISLNGNLFERTVSKIVINALKTEEGKAFFENILQPLNGPINPNDYTIEVRKDLVKTLFKINTLGSGNIGPASCGHVVTVFYQISDMNNTLISEDTKTFTLGSAPVMLGLDNVIIGMMVGEAREAIIPAKYAVNNSNNIIFDDAYNYKVNVILKSILPQNFVKSNEVKIYDDEIAYRVPLLCGEKVSFNAKITRLSNGKILYDSKAKGQQIDMKIGDITYPLIFSYALQGKVTIGTRSVIAKGKTFKTLGSNINKIISHESLPTNEYLLLELGDFKQN</sequence>
<dbReference type="EC" id="5.2.1.8"/>
<dbReference type="EMBL" id="AE006914">
    <property type="protein sequence ID" value="AAL03080.1"/>
    <property type="molecule type" value="Genomic_DNA"/>
</dbReference>
<dbReference type="PIR" id="F97767">
    <property type="entry name" value="F97767"/>
</dbReference>
<dbReference type="RefSeq" id="WP_010977178.1">
    <property type="nucleotide sequence ID" value="NC_003103.1"/>
</dbReference>
<dbReference type="SMR" id="Q92I78"/>
<dbReference type="GeneID" id="927654"/>
<dbReference type="KEGG" id="rco:RC0542"/>
<dbReference type="PATRIC" id="fig|272944.4.peg.621"/>
<dbReference type="HOGENOM" id="CLU_839076_0_0_5"/>
<dbReference type="Proteomes" id="UP000000816">
    <property type="component" value="Chromosome"/>
</dbReference>
<dbReference type="GO" id="GO:0003755">
    <property type="term" value="F:peptidyl-prolyl cis-trans isomerase activity"/>
    <property type="evidence" value="ECO:0007669"/>
    <property type="project" value="UniProtKB-KW"/>
</dbReference>
<dbReference type="GO" id="GO:0006457">
    <property type="term" value="P:protein folding"/>
    <property type="evidence" value="ECO:0007669"/>
    <property type="project" value="UniProtKB-ARBA"/>
</dbReference>
<dbReference type="Gene3D" id="3.10.50.40">
    <property type="match status" value="1"/>
</dbReference>
<dbReference type="InterPro" id="IPR046357">
    <property type="entry name" value="PPIase_dom_sf"/>
</dbReference>
<dbReference type="InterPro" id="IPR001179">
    <property type="entry name" value="PPIase_FKBP_dom"/>
</dbReference>
<dbReference type="Pfam" id="PF00254">
    <property type="entry name" value="FKBP_C"/>
    <property type="match status" value="1"/>
</dbReference>
<dbReference type="SUPFAM" id="SSF54534">
    <property type="entry name" value="FKBP-like"/>
    <property type="match status" value="1"/>
</dbReference>
<dbReference type="PROSITE" id="PS50059">
    <property type="entry name" value="FKBP_PPIASE"/>
    <property type="match status" value="1"/>
</dbReference>
<organism>
    <name type="scientific">Rickettsia conorii (strain ATCC VR-613 / Malish 7)</name>
    <dbReference type="NCBI Taxonomy" id="272944"/>
    <lineage>
        <taxon>Bacteria</taxon>
        <taxon>Pseudomonadati</taxon>
        <taxon>Pseudomonadota</taxon>
        <taxon>Alphaproteobacteria</taxon>
        <taxon>Rickettsiales</taxon>
        <taxon>Rickettsiaceae</taxon>
        <taxon>Rickettsieae</taxon>
        <taxon>Rickettsia</taxon>
        <taxon>spotted fever group</taxon>
    </lineage>
</organism>
<evidence type="ECO:0000255" key="1">
    <source>
        <dbReference type="PROSITE-ProRule" id="PRU00277"/>
    </source>
</evidence>
<evidence type="ECO:0000256" key="2">
    <source>
        <dbReference type="SAM" id="MobiDB-lite"/>
    </source>
</evidence>